<accession>B2UCE8</accession>
<feature type="chain" id="PRO_1000097616" description="3-dehydroquinate dehydratase">
    <location>
        <begin position="1"/>
        <end position="155"/>
    </location>
</feature>
<feature type="active site" description="Proton acceptor" evidence="1">
    <location>
        <position position="32"/>
    </location>
</feature>
<feature type="active site" description="Proton donor" evidence="1">
    <location>
        <position position="110"/>
    </location>
</feature>
<feature type="binding site" evidence="1">
    <location>
        <position position="84"/>
    </location>
    <ligand>
        <name>substrate</name>
    </ligand>
</feature>
<feature type="binding site" evidence="1">
    <location>
        <position position="90"/>
    </location>
    <ligand>
        <name>substrate</name>
    </ligand>
</feature>
<feature type="binding site" evidence="1">
    <location>
        <position position="97"/>
    </location>
    <ligand>
        <name>substrate</name>
    </ligand>
</feature>
<feature type="binding site" evidence="1">
    <location>
        <begin position="111"/>
        <end position="112"/>
    </location>
    <ligand>
        <name>substrate</name>
    </ligand>
</feature>
<feature type="binding site" evidence="1">
    <location>
        <position position="121"/>
    </location>
    <ligand>
        <name>substrate</name>
    </ligand>
</feature>
<feature type="site" description="Transition state stabilizer" evidence="1">
    <location>
        <position position="27"/>
    </location>
</feature>
<dbReference type="EC" id="4.2.1.10" evidence="1"/>
<dbReference type="EMBL" id="CP001068">
    <property type="protein sequence ID" value="ACD28153.1"/>
    <property type="molecule type" value="Genomic_DNA"/>
</dbReference>
<dbReference type="SMR" id="B2UCE8"/>
<dbReference type="STRING" id="402626.Rpic_3030"/>
<dbReference type="KEGG" id="rpi:Rpic_3030"/>
<dbReference type="eggNOG" id="COG0757">
    <property type="taxonomic scope" value="Bacteria"/>
</dbReference>
<dbReference type="HOGENOM" id="CLU_090968_1_0_4"/>
<dbReference type="UniPathway" id="UPA00053">
    <property type="reaction ID" value="UER00086"/>
</dbReference>
<dbReference type="GO" id="GO:0003855">
    <property type="term" value="F:3-dehydroquinate dehydratase activity"/>
    <property type="evidence" value="ECO:0007669"/>
    <property type="project" value="UniProtKB-UniRule"/>
</dbReference>
<dbReference type="GO" id="GO:0008652">
    <property type="term" value="P:amino acid biosynthetic process"/>
    <property type="evidence" value="ECO:0007669"/>
    <property type="project" value="UniProtKB-KW"/>
</dbReference>
<dbReference type="GO" id="GO:0009073">
    <property type="term" value="P:aromatic amino acid family biosynthetic process"/>
    <property type="evidence" value="ECO:0007669"/>
    <property type="project" value="UniProtKB-KW"/>
</dbReference>
<dbReference type="GO" id="GO:0009423">
    <property type="term" value="P:chorismate biosynthetic process"/>
    <property type="evidence" value="ECO:0007669"/>
    <property type="project" value="UniProtKB-UniRule"/>
</dbReference>
<dbReference type="GO" id="GO:0019631">
    <property type="term" value="P:quinate catabolic process"/>
    <property type="evidence" value="ECO:0007669"/>
    <property type="project" value="TreeGrafter"/>
</dbReference>
<dbReference type="CDD" id="cd00466">
    <property type="entry name" value="DHQase_II"/>
    <property type="match status" value="1"/>
</dbReference>
<dbReference type="Gene3D" id="3.40.50.9100">
    <property type="entry name" value="Dehydroquinase, class II"/>
    <property type="match status" value="1"/>
</dbReference>
<dbReference type="HAMAP" id="MF_00169">
    <property type="entry name" value="AroQ"/>
    <property type="match status" value="1"/>
</dbReference>
<dbReference type="InterPro" id="IPR001874">
    <property type="entry name" value="DHquinase_II"/>
</dbReference>
<dbReference type="InterPro" id="IPR018509">
    <property type="entry name" value="DHquinase_II_CS"/>
</dbReference>
<dbReference type="InterPro" id="IPR036441">
    <property type="entry name" value="DHquinase_II_sf"/>
</dbReference>
<dbReference type="NCBIfam" id="TIGR01088">
    <property type="entry name" value="aroQ"/>
    <property type="match status" value="1"/>
</dbReference>
<dbReference type="NCBIfam" id="NF003804">
    <property type="entry name" value="PRK05395.1-1"/>
    <property type="match status" value="1"/>
</dbReference>
<dbReference type="NCBIfam" id="NF003805">
    <property type="entry name" value="PRK05395.1-2"/>
    <property type="match status" value="1"/>
</dbReference>
<dbReference type="NCBIfam" id="NF003806">
    <property type="entry name" value="PRK05395.1-3"/>
    <property type="match status" value="1"/>
</dbReference>
<dbReference type="NCBIfam" id="NF003807">
    <property type="entry name" value="PRK05395.1-4"/>
    <property type="match status" value="1"/>
</dbReference>
<dbReference type="PANTHER" id="PTHR21272">
    <property type="entry name" value="CATABOLIC 3-DEHYDROQUINASE"/>
    <property type="match status" value="1"/>
</dbReference>
<dbReference type="PANTHER" id="PTHR21272:SF3">
    <property type="entry name" value="CATABOLIC 3-DEHYDROQUINASE"/>
    <property type="match status" value="1"/>
</dbReference>
<dbReference type="Pfam" id="PF01220">
    <property type="entry name" value="DHquinase_II"/>
    <property type="match status" value="1"/>
</dbReference>
<dbReference type="PIRSF" id="PIRSF001399">
    <property type="entry name" value="DHquinase_II"/>
    <property type="match status" value="1"/>
</dbReference>
<dbReference type="SUPFAM" id="SSF52304">
    <property type="entry name" value="Type II 3-dehydroquinate dehydratase"/>
    <property type="match status" value="1"/>
</dbReference>
<dbReference type="PROSITE" id="PS01029">
    <property type="entry name" value="DEHYDROQUINASE_II"/>
    <property type="match status" value="1"/>
</dbReference>
<gene>
    <name evidence="1" type="primary">aroQ</name>
    <name type="ordered locus">Rpic_3030</name>
</gene>
<name>AROQ_RALPJ</name>
<sequence length="155" mass="16772">MADKPIAKALRNVLVLHGPNLNLLGTREPEVYGATTLADINTALVERATARGVTLAHFQSNHEGALVDRIHAAKSEGIEFIIINPAAYTHTSVALRDALAGVVIPYIEVHLSNVHRREPFRHHSYLADQAVGVICGLGWRGYLAALDFAIDQHGG</sequence>
<comment type="function">
    <text evidence="1">Catalyzes a trans-dehydration via an enolate intermediate.</text>
</comment>
<comment type="catalytic activity">
    <reaction evidence="1">
        <text>3-dehydroquinate = 3-dehydroshikimate + H2O</text>
        <dbReference type="Rhea" id="RHEA:21096"/>
        <dbReference type="ChEBI" id="CHEBI:15377"/>
        <dbReference type="ChEBI" id="CHEBI:16630"/>
        <dbReference type="ChEBI" id="CHEBI:32364"/>
        <dbReference type="EC" id="4.2.1.10"/>
    </reaction>
</comment>
<comment type="pathway">
    <text evidence="1">Metabolic intermediate biosynthesis; chorismate biosynthesis; chorismate from D-erythrose 4-phosphate and phosphoenolpyruvate: step 3/7.</text>
</comment>
<comment type="subunit">
    <text evidence="1">Homododecamer.</text>
</comment>
<comment type="similarity">
    <text evidence="1">Belongs to the type-II 3-dehydroquinase family.</text>
</comment>
<reference key="1">
    <citation type="submission" date="2008-05" db="EMBL/GenBank/DDBJ databases">
        <title>Complete sequence of chromosome 1 of Ralstonia pickettii 12J.</title>
        <authorList>
            <person name="Lucas S."/>
            <person name="Copeland A."/>
            <person name="Lapidus A."/>
            <person name="Glavina del Rio T."/>
            <person name="Dalin E."/>
            <person name="Tice H."/>
            <person name="Bruce D."/>
            <person name="Goodwin L."/>
            <person name="Pitluck S."/>
            <person name="Meincke L."/>
            <person name="Brettin T."/>
            <person name="Detter J.C."/>
            <person name="Han C."/>
            <person name="Kuske C.R."/>
            <person name="Schmutz J."/>
            <person name="Larimer F."/>
            <person name="Land M."/>
            <person name="Hauser L."/>
            <person name="Kyrpides N."/>
            <person name="Mikhailova N."/>
            <person name="Marsh T."/>
            <person name="Richardson P."/>
        </authorList>
    </citation>
    <scope>NUCLEOTIDE SEQUENCE [LARGE SCALE GENOMIC DNA]</scope>
    <source>
        <strain>12J</strain>
    </source>
</reference>
<evidence type="ECO:0000255" key="1">
    <source>
        <dbReference type="HAMAP-Rule" id="MF_00169"/>
    </source>
</evidence>
<protein>
    <recommendedName>
        <fullName evidence="1">3-dehydroquinate dehydratase</fullName>
        <shortName evidence="1">3-dehydroquinase</shortName>
        <ecNumber evidence="1">4.2.1.10</ecNumber>
    </recommendedName>
    <alternativeName>
        <fullName evidence="1">Type II DHQase</fullName>
    </alternativeName>
</protein>
<organism>
    <name type="scientific">Ralstonia pickettii (strain 12J)</name>
    <dbReference type="NCBI Taxonomy" id="402626"/>
    <lineage>
        <taxon>Bacteria</taxon>
        <taxon>Pseudomonadati</taxon>
        <taxon>Pseudomonadota</taxon>
        <taxon>Betaproteobacteria</taxon>
        <taxon>Burkholderiales</taxon>
        <taxon>Burkholderiaceae</taxon>
        <taxon>Ralstonia</taxon>
    </lineage>
</organism>
<proteinExistence type="inferred from homology"/>
<keyword id="KW-0028">Amino-acid biosynthesis</keyword>
<keyword id="KW-0057">Aromatic amino acid biosynthesis</keyword>
<keyword id="KW-0456">Lyase</keyword>